<name>APRE_PSEAE</name>
<evidence type="ECO:0000255" key="1"/>
<evidence type="ECO:0000305" key="2"/>
<reference key="1">
    <citation type="journal article" date="1992" name="Gene">
        <title>Sequence of a cluster of genes controlling synthesis and secretion of alkaline protease in Pseudomonas aeruginosa: relationships to other secretory pathways.</title>
        <authorList>
            <person name="Duong F."/>
            <person name="Lazdunski A."/>
            <person name="Cami B."/>
            <person name="Murgier M."/>
        </authorList>
    </citation>
    <scope>NUCLEOTIDE SEQUENCE [GENOMIC DNA]</scope>
    <source>
        <strain>ATCC 15692 / DSM 22644 / CIP 104116 / JCM 14847 / LMG 12228 / 1C / PRS 101 / PAO1</strain>
    </source>
</reference>
<reference key="2">
    <citation type="journal article" date="2000" name="Nature">
        <title>Complete genome sequence of Pseudomonas aeruginosa PAO1, an opportunistic pathogen.</title>
        <authorList>
            <person name="Stover C.K."/>
            <person name="Pham X.-Q.T."/>
            <person name="Erwin A.L."/>
            <person name="Mizoguchi S.D."/>
            <person name="Warrener P."/>
            <person name="Hickey M.J."/>
            <person name="Brinkman F.S.L."/>
            <person name="Hufnagle W.O."/>
            <person name="Kowalik D.J."/>
            <person name="Lagrou M."/>
            <person name="Garber R.L."/>
            <person name="Goltry L."/>
            <person name="Tolentino E."/>
            <person name="Westbrock-Wadman S."/>
            <person name="Yuan Y."/>
            <person name="Brody L.L."/>
            <person name="Coulter S.N."/>
            <person name="Folger K.R."/>
            <person name="Kas A."/>
            <person name="Larbig K."/>
            <person name="Lim R.M."/>
            <person name="Smith K.A."/>
            <person name="Spencer D.H."/>
            <person name="Wong G.K.-S."/>
            <person name="Wu Z."/>
            <person name="Paulsen I.T."/>
            <person name="Reizer J."/>
            <person name="Saier M.H. Jr."/>
            <person name="Hancock R.E.W."/>
            <person name="Lory S."/>
            <person name="Olson M.V."/>
        </authorList>
    </citation>
    <scope>NUCLEOTIDE SEQUENCE [LARGE SCALE GENOMIC DNA]</scope>
    <source>
        <strain>ATCC 15692 / DSM 22644 / CIP 104116 / JCM 14847 / LMG 12228 / 1C / PRS 101 / PAO1</strain>
    </source>
</reference>
<accession>Q03025</accession>
<dbReference type="EMBL" id="X64558">
    <property type="protein sequence ID" value="CAA45856.1"/>
    <property type="molecule type" value="Genomic_DNA"/>
</dbReference>
<dbReference type="EMBL" id="AE004091">
    <property type="protein sequence ID" value="AAG04636.1"/>
    <property type="molecule type" value="Genomic_DNA"/>
</dbReference>
<dbReference type="PIR" id="G83489">
    <property type="entry name" value="G83489"/>
</dbReference>
<dbReference type="PIR" id="S26697">
    <property type="entry name" value="S26697"/>
</dbReference>
<dbReference type="RefSeq" id="NP_249938.1">
    <property type="nucleotide sequence ID" value="NC_002516.2"/>
</dbReference>
<dbReference type="RefSeq" id="WP_003082540.1">
    <property type="nucleotide sequence ID" value="NZ_QZGE01000005.1"/>
</dbReference>
<dbReference type="SMR" id="Q03025"/>
<dbReference type="STRING" id="208964.PA1247"/>
<dbReference type="PaxDb" id="208964-PA1247"/>
<dbReference type="GeneID" id="881276"/>
<dbReference type="KEGG" id="pae:PA1247"/>
<dbReference type="PATRIC" id="fig|208964.12.peg.1294"/>
<dbReference type="PseudoCAP" id="PA1247"/>
<dbReference type="HOGENOM" id="CLU_023976_1_1_6"/>
<dbReference type="InParanoid" id="Q03025"/>
<dbReference type="OrthoDB" id="9775513at2"/>
<dbReference type="PhylomeDB" id="Q03025"/>
<dbReference type="BioCyc" id="PAER208964:G1FZ6-1272-MONOMER"/>
<dbReference type="Proteomes" id="UP000002438">
    <property type="component" value="Chromosome"/>
</dbReference>
<dbReference type="GO" id="GO:0005886">
    <property type="term" value="C:plasma membrane"/>
    <property type="evidence" value="ECO:0007669"/>
    <property type="project" value="UniProtKB-SubCell"/>
</dbReference>
<dbReference type="GO" id="GO:0009306">
    <property type="term" value="P:protein secretion"/>
    <property type="evidence" value="ECO:0007669"/>
    <property type="project" value="InterPro"/>
</dbReference>
<dbReference type="GO" id="GO:0046903">
    <property type="term" value="P:secretion"/>
    <property type="evidence" value="ECO:0000314"/>
    <property type="project" value="PseudoCAP"/>
</dbReference>
<dbReference type="GO" id="GO:0055085">
    <property type="term" value="P:transmembrane transport"/>
    <property type="evidence" value="ECO:0007669"/>
    <property type="project" value="InterPro"/>
</dbReference>
<dbReference type="Gene3D" id="2.40.30.170">
    <property type="match status" value="1"/>
</dbReference>
<dbReference type="Gene3D" id="2.40.50.100">
    <property type="match status" value="1"/>
</dbReference>
<dbReference type="InterPro" id="IPR050739">
    <property type="entry name" value="MFP"/>
</dbReference>
<dbReference type="InterPro" id="IPR006144">
    <property type="entry name" value="Secretion_HlyD_CS"/>
</dbReference>
<dbReference type="InterPro" id="IPR010129">
    <property type="entry name" value="T1SS_HlyD"/>
</dbReference>
<dbReference type="NCBIfam" id="TIGR01843">
    <property type="entry name" value="type_I_hlyD"/>
    <property type="match status" value="1"/>
</dbReference>
<dbReference type="PANTHER" id="PTHR30386:SF17">
    <property type="entry name" value="ALKALINE PROTEASE SECRETION PROTEIN APRE"/>
    <property type="match status" value="1"/>
</dbReference>
<dbReference type="PANTHER" id="PTHR30386">
    <property type="entry name" value="MEMBRANE FUSION SUBUNIT OF EMRAB-TOLC MULTIDRUG EFFLUX PUMP"/>
    <property type="match status" value="1"/>
</dbReference>
<dbReference type="Pfam" id="PF13437">
    <property type="entry name" value="HlyD_3"/>
    <property type="match status" value="1"/>
</dbReference>
<dbReference type="PRINTS" id="PR01490">
    <property type="entry name" value="RTXTOXIND"/>
</dbReference>
<dbReference type="SUPFAM" id="SSF111369">
    <property type="entry name" value="HlyD-like secretion proteins"/>
    <property type="match status" value="1"/>
</dbReference>
<dbReference type="PROSITE" id="PS00543">
    <property type="entry name" value="HLYD_FAMILY"/>
    <property type="match status" value="1"/>
</dbReference>
<comment type="function">
    <text>Involved in the secretion of alkaline protease.</text>
</comment>
<comment type="subcellular location">
    <subcellularLocation>
        <location evidence="2">Cell inner membrane</location>
        <topology evidence="2">Single-pass membrane protein</topology>
    </subcellularLocation>
</comment>
<comment type="similarity">
    <text evidence="2">Belongs to the membrane fusion protein (MFP) (TC 8.A.1) family.</text>
</comment>
<feature type="chain" id="PRO_0000201862" description="Alkaline protease secretion protein AprE">
    <location>
        <begin position="1"/>
        <end position="432"/>
    </location>
</feature>
<feature type="topological domain" description="Cytoplasmic" evidence="1">
    <location>
        <begin position="1"/>
        <end position="14"/>
    </location>
</feature>
<feature type="transmembrane region" description="Helical" evidence="1">
    <location>
        <begin position="15"/>
        <end position="36"/>
    </location>
</feature>
<feature type="topological domain" description="Periplasmic" evidence="1">
    <location>
        <begin position="37"/>
        <end position="432"/>
    </location>
</feature>
<feature type="sequence conflict" description="In Ref. 1; CAA45856." evidence="2" ref="1">
    <original>AL</original>
    <variation>RV</variation>
    <location>
        <begin position="378"/>
        <end position="379"/>
    </location>
</feature>
<gene>
    <name type="primary">aprE</name>
    <name type="ordered locus">PA1247</name>
</gene>
<keyword id="KW-0997">Cell inner membrane</keyword>
<keyword id="KW-1003">Cell membrane</keyword>
<keyword id="KW-0472">Membrane</keyword>
<keyword id="KW-1185">Reference proteome</keyword>
<keyword id="KW-0812">Transmembrane</keyword>
<keyword id="KW-1133">Transmembrane helix</keyword>
<keyword id="KW-0813">Transport</keyword>
<proteinExistence type="inferred from homology"/>
<organism>
    <name type="scientific">Pseudomonas aeruginosa (strain ATCC 15692 / DSM 22644 / CIP 104116 / JCM 14847 / LMG 12228 / 1C / PRS 101 / PAO1)</name>
    <dbReference type="NCBI Taxonomy" id="208964"/>
    <lineage>
        <taxon>Bacteria</taxon>
        <taxon>Pseudomonadati</taxon>
        <taxon>Pseudomonadota</taxon>
        <taxon>Gammaproteobacteria</taxon>
        <taxon>Pseudomonadales</taxon>
        <taxon>Pseudomonadaceae</taxon>
        <taxon>Pseudomonas</taxon>
    </lineage>
</organism>
<sequence length="432" mass="48053">MTRTVKRDENAYARLGWLLVLFGFGGALLWAAFAPLDQGVAVPATVIISGQRKSVQHPLGGVVKHILVRDGQHVEAGEPLIRMEPTQARANVDSLLNRYANARLNQARLQAEYDGRRTLEMPAGLAEQAPLPTLGERLELQRQLLHSRQTALANELSALRANIEGLRAQLEGLRQTEGNQRLQQRLLNSQLSGARDLAEEGYMPRNQLLEQERQLAEVNARLSESSGRFGQIRQSIAEAQMRIAQREEEYRKEVNGQLAETQVNARTLWEELSSARYELRHAEIRAPVSGYVAGLKVFTDGGVIGPGELLMYIVPNSDSLEVEGQLAVNLVDRIHSGLPVEMLFTAFNQSKTPRVTGEVTMVSADRLLDEQNKQPYYALRAQVDAAAMGKLKGLQIRPGMAVQVFVRTGERSLLNYLFKPLFDRAHVALAEN</sequence>
<protein>
    <recommendedName>
        <fullName>Alkaline protease secretion protein AprE</fullName>
    </recommendedName>
</protein>